<reference key="1">
    <citation type="journal article" date="2004" name="Environ. Microbiol.">
        <title>The genome of Desulfotalea psychrophila, a sulfate-reducing bacterium from permanently cold Arctic sediments.</title>
        <authorList>
            <person name="Rabus R."/>
            <person name="Ruepp A."/>
            <person name="Frickey T."/>
            <person name="Rattei T."/>
            <person name="Fartmann B."/>
            <person name="Stark M."/>
            <person name="Bauer M."/>
            <person name="Zibat A."/>
            <person name="Lombardot T."/>
            <person name="Becker I."/>
            <person name="Amann J."/>
            <person name="Gellner K."/>
            <person name="Teeling H."/>
            <person name="Leuschner W.D."/>
            <person name="Gloeckner F.-O."/>
            <person name="Lupas A.N."/>
            <person name="Amann R."/>
            <person name="Klenk H.-P."/>
        </authorList>
    </citation>
    <scope>NUCLEOTIDE SEQUENCE [LARGE SCALE GENOMIC DNA]</scope>
    <source>
        <strain>DSM 12343 / LSv54</strain>
    </source>
</reference>
<comment type="function">
    <text evidence="1">Specifically methylates the guanosine in position 1516 of 16S rRNA.</text>
</comment>
<comment type="catalytic activity">
    <reaction evidence="1">
        <text>guanosine(1516) in 16S rRNA + S-adenosyl-L-methionine = N(2)-methylguanosine(1516) in 16S rRNA + S-adenosyl-L-homocysteine + H(+)</text>
        <dbReference type="Rhea" id="RHEA:43220"/>
        <dbReference type="Rhea" id="RHEA-COMP:10412"/>
        <dbReference type="Rhea" id="RHEA-COMP:10413"/>
        <dbReference type="ChEBI" id="CHEBI:15378"/>
        <dbReference type="ChEBI" id="CHEBI:57856"/>
        <dbReference type="ChEBI" id="CHEBI:59789"/>
        <dbReference type="ChEBI" id="CHEBI:74269"/>
        <dbReference type="ChEBI" id="CHEBI:74481"/>
        <dbReference type="EC" id="2.1.1.242"/>
    </reaction>
</comment>
<comment type="subcellular location">
    <subcellularLocation>
        <location evidence="1">Cytoplasm</location>
    </subcellularLocation>
</comment>
<comment type="similarity">
    <text evidence="1">Belongs to the methyltransferase superfamily. RsmJ family.</text>
</comment>
<accession>Q6AL31</accession>
<gene>
    <name evidence="1" type="primary">rsmJ</name>
    <name type="ordered locus">DP2215</name>
</gene>
<organism>
    <name type="scientific">Desulfotalea psychrophila (strain LSv54 / DSM 12343)</name>
    <dbReference type="NCBI Taxonomy" id="177439"/>
    <lineage>
        <taxon>Bacteria</taxon>
        <taxon>Pseudomonadati</taxon>
        <taxon>Thermodesulfobacteriota</taxon>
        <taxon>Desulfobulbia</taxon>
        <taxon>Desulfobulbales</taxon>
        <taxon>Desulfocapsaceae</taxon>
        <taxon>Desulfotalea</taxon>
    </lineage>
</organism>
<keyword id="KW-0963">Cytoplasm</keyword>
<keyword id="KW-0489">Methyltransferase</keyword>
<keyword id="KW-1185">Reference proteome</keyword>
<keyword id="KW-0698">rRNA processing</keyword>
<keyword id="KW-0949">S-adenosyl-L-methionine</keyword>
<keyword id="KW-0808">Transferase</keyword>
<sequence>MLHNITLSLVPEIITDNILIKAKEIAQFLNIPLSDRREEYPQALIWDRDGLSLCSISAKDGSHAKLLYIDFMGGKNGYRHANDCTTRQPIAKAVGIKPGFRPTVFDATAGMGGDGFVLACLGCRVTLCERSPIMYTLLQDGIERARQDSVMNKIMANLDLIHNNSKQFLENHGTNYHTIYMDPMYPHKKKSALNKKEMRVIRDLVGDDNDSDNLLETALTVAGNRVVVKRPKGAPYIEERKPHHEITMKNSRFDVYLTSYL</sequence>
<name>RSMJ_DESPS</name>
<protein>
    <recommendedName>
        <fullName evidence="1">Ribosomal RNA small subunit methyltransferase J</fullName>
        <ecNumber evidence="1">2.1.1.242</ecNumber>
    </recommendedName>
    <alternativeName>
        <fullName evidence="1">16S rRNA m2G1516 methyltransferase</fullName>
    </alternativeName>
    <alternativeName>
        <fullName evidence="1">rRNA (guanine-N(2)-)-methyltransferase</fullName>
    </alternativeName>
</protein>
<proteinExistence type="inferred from homology"/>
<dbReference type="EC" id="2.1.1.242" evidence="1"/>
<dbReference type="EMBL" id="CR522870">
    <property type="protein sequence ID" value="CAG36944.1"/>
    <property type="molecule type" value="Genomic_DNA"/>
</dbReference>
<dbReference type="RefSeq" id="WP_011189456.1">
    <property type="nucleotide sequence ID" value="NC_006138.1"/>
</dbReference>
<dbReference type="SMR" id="Q6AL31"/>
<dbReference type="STRING" id="177439.DP2215"/>
<dbReference type="KEGG" id="dps:DP2215"/>
<dbReference type="eggNOG" id="COG4123">
    <property type="taxonomic scope" value="Bacteria"/>
</dbReference>
<dbReference type="HOGENOM" id="CLU_076324_0_1_7"/>
<dbReference type="OrthoDB" id="3191794at2"/>
<dbReference type="Proteomes" id="UP000000602">
    <property type="component" value="Chromosome"/>
</dbReference>
<dbReference type="GO" id="GO:0005737">
    <property type="term" value="C:cytoplasm"/>
    <property type="evidence" value="ECO:0007669"/>
    <property type="project" value="UniProtKB-SubCell"/>
</dbReference>
<dbReference type="GO" id="GO:0008990">
    <property type="term" value="F:rRNA (guanine-N2-)-methyltransferase activity"/>
    <property type="evidence" value="ECO:0007669"/>
    <property type="project" value="UniProtKB-UniRule"/>
</dbReference>
<dbReference type="CDD" id="cd02440">
    <property type="entry name" value="AdoMet_MTases"/>
    <property type="match status" value="1"/>
</dbReference>
<dbReference type="Gene3D" id="3.40.50.150">
    <property type="entry name" value="Vaccinia Virus protein VP39"/>
    <property type="match status" value="1"/>
</dbReference>
<dbReference type="HAMAP" id="MF_01523">
    <property type="entry name" value="16SrRNA_methyltr_J"/>
    <property type="match status" value="1"/>
</dbReference>
<dbReference type="InterPro" id="IPR007536">
    <property type="entry name" value="16SrRNA_methylTrfase_J"/>
</dbReference>
<dbReference type="InterPro" id="IPR029063">
    <property type="entry name" value="SAM-dependent_MTases_sf"/>
</dbReference>
<dbReference type="PANTHER" id="PTHR36112">
    <property type="entry name" value="RIBOSOMAL RNA SMALL SUBUNIT METHYLTRANSFERASE J"/>
    <property type="match status" value="1"/>
</dbReference>
<dbReference type="PANTHER" id="PTHR36112:SF1">
    <property type="entry name" value="RIBOSOMAL RNA SMALL SUBUNIT METHYLTRANSFERASE J"/>
    <property type="match status" value="1"/>
</dbReference>
<dbReference type="Pfam" id="PF04445">
    <property type="entry name" value="SAM_MT"/>
    <property type="match status" value="1"/>
</dbReference>
<dbReference type="SUPFAM" id="SSF53335">
    <property type="entry name" value="S-adenosyl-L-methionine-dependent methyltransferases"/>
    <property type="match status" value="1"/>
</dbReference>
<evidence type="ECO:0000255" key="1">
    <source>
        <dbReference type="HAMAP-Rule" id="MF_01523"/>
    </source>
</evidence>
<feature type="chain" id="PRO_0000212063" description="Ribosomal RNA small subunit methyltransferase J">
    <location>
        <begin position="1"/>
        <end position="261"/>
    </location>
</feature>
<feature type="binding site" evidence="1">
    <location>
        <begin position="129"/>
        <end position="130"/>
    </location>
    <ligand>
        <name>S-adenosyl-L-methionine</name>
        <dbReference type="ChEBI" id="CHEBI:59789"/>
    </ligand>
</feature>
<feature type="binding site" evidence="1">
    <location>
        <position position="182"/>
    </location>
    <ligand>
        <name>S-adenosyl-L-methionine</name>
        <dbReference type="ChEBI" id="CHEBI:59789"/>
    </ligand>
</feature>